<evidence type="ECO:0000250" key="1"/>
<evidence type="ECO:0000255" key="2"/>
<evidence type="ECO:0000305" key="3"/>
<keyword id="KW-1003">Cell membrane</keyword>
<keyword id="KW-0961">Cell wall biogenesis/degradation</keyword>
<keyword id="KW-0325">Glycoprotein</keyword>
<keyword id="KW-0472">Membrane</keyword>
<keyword id="KW-1185">Reference proteome</keyword>
<keyword id="KW-0812">Transmembrane</keyword>
<keyword id="KW-1133">Transmembrane helix</keyword>
<reference key="1">
    <citation type="journal article" date="2006" name="Mol. Genet. Genomics">
        <title>Tissue expression map of a large number of expressed sequence tags and its application to in silico screening of stress response genes in common wheat.</title>
        <authorList>
            <person name="Mochida K."/>
            <person name="Kawaura K."/>
            <person name="Shimosaka E."/>
            <person name="Kawakami N."/>
            <person name="Shin-I T."/>
            <person name="Kohara Y."/>
            <person name="Yamazaki Y."/>
            <person name="Ogihara Y."/>
        </authorList>
    </citation>
    <scope>NUCLEOTIDE SEQUENCE [LARGE SCALE MRNA]</scope>
    <source>
        <strain>cv. DT4B(CS)</strain>
        <tissue>Anther</tissue>
    </source>
</reference>
<reference key="2">
    <citation type="journal article" date="2014" name="Plant Physiol.">
        <title>Functional and evolutionary analysis of the CASPARIAN STRIP MEMBRANE DOMAIN PROTEIN family.</title>
        <authorList>
            <person name="Roppolo D."/>
            <person name="Boeckmann B."/>
            <person name="Pfister A."/>
            <person name="Boutet E."/>
            <person name="Rubio M.C."/>
            <person name="Denervaud-Tendon V."/>
            <person name="Vermeer J.E."/>
            <person name="Gheyselinck J."/>
            <person name="Xenarios I."/>
            <person name="Geldner N."/>
        </authorList>
    </citation>
    <scope>GENE FAMILY</scope>
    <scope>NOMENCLATURE</scope>
</reference>
<name>CASP2_WHEAT</name>
<organism>
    <name type="scientific">Triticum aestivum</name>
    <name type="common">Wheat</name>
    <dbReference type="NCBI Taxonomy" id="4565"/>
    <lineage>
        <taxon>Eukaryota</taxon>
        <taxon>Viridiplantae</taxon>
        <taxon>Streptophyta</taxon>
        <taxon>Embryophyta</taxon>
        <taxon>Tracheophyta</taxon>
        <taxon>Spermatophyta</taxon>
        <taxon>Magnoliopsida</taxon>
        <taxon>Liliopsida</taxon>
        <taxon>Poales</taxon>
        <taxon>Poaceae</taxon>
        <taxon>BOP clade</taxon>
        <taxon>Pooideae</taxon>
        <taxon>Triticodae</taxon>
        <taxon>Triticeae</taxon>
        <taxon>Triticinae</taxon>
        <taxon>Triticum</taxon>
    </lineage>
</organism>
<accession>P0DI42</accession>
<proteinExistence type="evidence at transcript level"/>
<sequence length="183" mass="19430">MDSGEQGETSKAPLNKGVSRGVSILDLILRVIAVISTLASAIAMGTTNETLPLFTPFIQFKARYSDLPALTFFVVANSIVSAYLILSLPLSIAHIIRSGAKYSRLVLIIFDAAMLALVTAASSAATAIVYLAHKGNVRANWLAICQQLDSFCERTSGSLVGSFGAMVLLILLILLSAMALARR</sequence>
<feature type="chain" id="PRO_0000417817" description="Casparian strip membrane protein 2">
    <location>
        <begin position="1"/>
        <end position="183"/>
    </location>
</feature>
<feature type="topological domain" description="Cytoplasmic" evidence="2">
    <location>
        <begin position="1"/>
        <end position="23"/>
    </location>
</feature>
<feature type="transmembrane region" description="Helical" evidence="2">
    <location>
        <begin position="24"/>
        <end position="44"/>
    </location>
</feature>
<feature type="topological domain" description="Extracellular" evidence="2">
    <location>
        <begin position="45"/>
        <end position="71"/>
    </location>
</feature>
<feature type="transmembrane region" description="Helical" evidence="2">
    <location>
        <begin position="72"/>
        <end position="92"/>
    </location>
</feature>
<feature type="topological domain" description="Cytoplasmic" evidence="2">
    <location>
        <begin position="93"/>
        <end position="104"/>
    </location>
</feature>
<feature type="transmembrane region" description="Helical" evidence="2">
    <location>
        <begin position="105"/>
        <end position="125"/>
    </location>
</feature>
<feature type="topological domain" description="Extracellular" evidence="2">
    <location>
        <begin position="126"/>
        <end position="158"/>
    </location>
</feature>
<feature type="transmembrane region" description="Helical" evidence="2">
    <location>
        <begin position="159"/>
        <end position="179"/>
    </location>
</feature>
<feature type="topological domain" description="Cytoplasmic" evidence="2">
    <location>
        <begin position="180"/>
        <end position="183"/>
    </location>
</feature>
<feature type="glycosylation site" description="N-linked (GlcNAc...) asparagine" evidence="2">
    <location>
        <position position="48"/>
    </location>
</feature>
<protein>
    <recommendedName>
        <fullName>Casparian strip membrane protein 2</fullName>
        <shortName>TaCASP2</shortName>
    </recommendedName>
</protein>
<dbReference type="EMBL" id="CJ652718">
    <property type="status" value="NOT_ANNOTATED_CDS"/>
    <property type="molecule type" value="mRNA"/>
</dbReference>
<dbReference type="RefSeq" id="XP_044442118.1">
    <property type="nucleotide sequence ID" value="XM_044586183.1"/>
</dbReference>
<dbReference type="STRING" id="4565.P0DI42"/>
<dbReference type="PaxDb" id="4565-Traes_7AS_8EB52BB31.1"/>
<dbReference type="EnsemblPlants" id="TraesARI7D03G04412610.1">
    <property type="protein sequence ID" value="TraesARI7D03G04412610.1"/>
    <property type="gene ID" value="TraesARI7D03G04412610"/>
</dbReference>
<dbReference type="EnsemblPlants" id="TraesCAD_scaffold_094216_01G000100.1">
    <property type="protein sequence ID" value="TraesCAD_scaffold_094216_01G000100.1"/>
    <property type="gene ID" value="TraesCAD_scaffold_094216_01G000100"/>
</dbReference>
<dbReference type="EnsemblPlants" id="TraesCLE_scaffold_087687_01G000100.1">
    <property type="protein sequence ID" value="TraesCLE_scaffold_087687_01G000100.1"/>
    <property type="gene ID" value="TraesCLE_scaffold_087687_01G000100"/>
</dbReference>
<dbReference type="EnsemblPlants" id="TraesCS7D02G190400.1">
    <property type="protein sequence ID" value="TraesCS7D02G190400.1"/>
    <property type="gene ID" value="TraesCS7D02G190400"/>
</dbReference>
<dbReference type="EnsemblPlants" id="TraesCS7D03G0427400.1">
    <property type="protein sequence ID" value="TraesCS7D03G0427400.1.CDS"/>
    <property type="gene ID" value="TraesCS7D03G0427400"/>
</dbReference>
<dbReference type="EnsemblPlants" id="TraesJAG7D03G04320420.1">
    <property type="protein sequence ID" value="TraesJAG7D03G04320420.1"/>
    <property type="gene ID" value="TraesJAG7D03G04320420"/>
</dbReference>
<dbReference type="EnsemblPlants" id="TraesJUL7D03G04380930.1">
    <property type="protein sequence ID" value="TraesJUL7D03G04380930.1"/>
    <property type="gene ID" value="TraesJUL7D03G04380930"/>
</dbReference>
<dbReference type="EnsemblPlants" id="TraesKAR7D01G0108890.1">
    <property type="protein sequence ID" value="cds.TraesKAR7D01G0108890.1"/>
    <property type="gene ID" value="TraesKAR7D01G0108890"/>
</dbReference>
<dbReference type="EnsemblPlants" id="TraesLAC7D03G04284270.1">
    <property type="protein sequence ID" value="TraesLAC7D03G04284270.1"/>
    <property type="gene ID" value="TraesLAC7D03G04284270"/>
</dbReference>
<dbReference type="EnsemblPlants" id="TraesLDM7D03G04343620.1">
    <property type="protein sequence ID" value="TraesLDM7D03G04343620.1"/>
    <property type="gene ID" value="TraesLDM7D03G04343620"/>
</dbReference>
<dbReference type="EnsemblPlants" id="TraesMAC7D03G04329740.1">
    <property type="protein sequence ID" value="TraesMAC7D03G04329740.1"/>
    <property type="gene ID" value="TraesMAC7D03G04329740"/>
</dbReference>
<dbReference type="EnsemblPlants" id="TraesNOR7D03G04386220.1">
    <property type="protein sequence ID" value="TraesNOR7D03G04386220.1"/>
    <property type="gene ID" value="TraesNOR7D03G04386220"/>
</dbReference>
<dbReference type="EnsemblPlants" id="TraesPARA_EIv1.0_2548010.1">
    <property type="protein sequence ID" value="TraesPARA_EIv1.0_2548010.1.CDS"/>
    <property type="gene ID" value="TraesPARA_EIv1.0_2548010"/>
</dbReference>
<dbReference type="EnsemblPlants" id="TraesROB_scaffold_090130_01G000100.1">
    <property type="protein sequence ID" value="TraesROB_scaffold_090130_01G000100.1"/>
    <property type="gene ID" value="TraesROB_scaffold_090130_01G000100"/>
</dbReference>
<dbReference type="EnsemblPlants" id="TraesSTA7D03G04330960.1">
    <property type="protein sequence ID" value="TraesSTA7D03G04330960.1"/>
    <property type="gene ID" value="TraesSTA7D03G04330960"/>
</dbReference>
<dbReference type="EnsemblPlants" id="TraesSYM7D03G04390200.1">
    <property type="protein sequence ID" value="TraesSYM7D03G04390200.1"/>
    <property type="gene ID" value="TraesSYM7D03G04390200"/>
</dbReference>
<dbReference type="EnsemblPlants" id="TraesWEE_scaffold_103525_01G000100.1">
    <property type="protein sequence ID" value="TraesWEE_scaffold_103525_01G000100.1"/>
    <property type="gene ID" value="TraesWEE_scaffold_103525_01G000100"/>
</dbReference>
<dbReference type="GeneID" id="123168315"/>
<dbReference type="Gramene" id="TraesARI7D03G04412610.1">
    <property type="protein sequence ID" value="TraesARI7D03G04412610.1"/>
    <property type="gene ID" value="TraesARI7D03G04412610"/>
</dbReference>
<dbReference type="Gramene" id="TraesCAD_scaffold_094216_01G000100.1">
    <property type="protein sequence ID" value="TraesCAD_scaffold_094216_01G000100.1"/>
    <property type="gene ID" value="TraesCAD_scaffold_094216_01G000100"/>
</dbReference>
<dbReference type="Gramene" id="TraesCLE_scaffold_087687_01G000100.1">
    <property type="protein sequence ID" value="TraesCLE_scaffold_087687_01G000100.1"/>
    <property type="gene ID" value="TraesCLE_scaffold_087687_01G000100"/>
</dbReference>
<dbReference type="Gramene" id="TraesCS7D02G190400.1">
    <property type="protein sequence ID" value="TraesCS7D02G190400.1"/>
    <property type="gene ID" value="TraesCS7D02G190400"/>
</dbReference>
<dbReference type="Gramene" id="TraesCS7D03G0427400.1">
    <property type="protein sequence ID" value="TraesCS7D03G0427400.1.CDS"/>
    <property type="gene ID" value="TraesCS7D03G0427400"/>
</dbReference>
<dbReference type="Gramene" id="TraesJAG7D03G04320420.1">
    <property type="protein sequence ID" value="TraesJAG7D03G04320420.1"/>
    <property type="gene ID" value="TraesJAG7D03G04320420"/>
</dbReference>
<dbReference type="Gramene" id="TraesJUL7D03G04380930.1">
    <property type="protein sequence ID" value="TraesJUL7D03G04380930.1"/>
    <property type="gene ID" value="TraesJUL7D03G04380930"/>
</dbReference>
<dbReference type="Gramene" id="TraesKAR7D01G0108890.1">
    <property type="protein sequence ID" value="cds.TraesKAR7D01G0108890.1"/>
    <property type="gene ID" value="TraesKAR7D01G0108890"/>
</dbReference>
<dbReference type="Gramene" id="TraesLAC7D03G04284270.1">
    <property type="protein sequence ID" value="TraesLAC7D03G04284270.1"/>
    <property type="gene ID" value="TraesLAC7D03G04284270"/>
</dbReference>
<dbReference type="Gramene" id="TraesLDM7D03G04343620.1">
    <property type="protein sequence ID" value="TraesLDM7D03G04343620.1"/>
    <property type="gene ID" value="TraesLDM7D03G04343620"/>
</dbReference>
<dbReference type="Gramene" id="TraesMAC7D03G04329740.1">
    <property type="protein sequence ID" value="TraesMAC7D03G04329740.1"/>
    <property type="gene ID" value="TraesMAC7D03G04329740"/>
</dbReference>
<dbReference type="Gramene" id="TraesNOR7D03G04386220.1">
    <property type="protein sequence ID" value="TraesNOR7D03G04386220.1"/>
    <property type="gene ID" value="TraesNOR7D03G04386220"/>
</dbReference>
<dbReference type="Gramene" id="TraesPARA_EIv1.0_2548010.1">
    <property type="protein sequence ID" value="TraesPARA_EIv1.0_2548010.1.CDS"/>
    <property type="gene ID" value="TraesPARA_EIv1.0_2548010"/>
</dbReference>
<dbReference type="Gramene" id="TraesROB_scaffold_090130_01G000100.1">
    <property type="protein sequence ID" value="TraesROB_scaffold_090130_01G000100.1"/>
    <property type="gene ID" value="TraesROB_scaffold_090130_01G000100"/>
</dbReference>
<dbReference type="Gramene" id="TraesSTA7D03G04330960.1">
    <property type="protein sequence ID" value="TraesSTA7D03G04330960.1"/>
    <property type="gene ID" value="TraesSTA7D03G04330960"/>
</dbReference>
<dbReference type="Gramene" id="TraesSYM7D03G04390200.1">
    <property type="protein sequence ID" value="TraesSYM7D03G04390200.1"/>
    <property type="gene ID" value="TraesSYM7D03G04390200"/>
</dbReference>
<dbReference type="Gramene" id="TraesWEE_scaffold_103525_01G000100.1">
    <property type="protein sequence ID" value="TraesWEE_scaffold_103525_01G000100.1"/>
    <property type="gene ID" value="TraesWEE_scaffold_103525_01G000100"/>
</dbReference>
<dbReference type="eggNOG" id="ENOG502RXTK">
    <property type="taxonomic scope" value="Eukaryota"/>
</dbReference>
<dbReference type="OMA" id="ANWLSIC"/>
<dbReference type="Proteomes" id="UP000019116">
    <property type="component" value="Chromosome 7D"/>
</dbReference>
<dbReference type="GO" id="GO:0005886">
    <property type="term" value="C:plasma membrane"/>
    <property type="evidence" value="ECO:0000318"/>
    <property type="project" value="GO_Central"/>
</dbReference>
<dbReference type="GO" id="GO:0071555">
    <property type="term" value="P:cell wall organization"/>
    <property type="evidence" value="ECO:0007669"/>
    <property type="project" value="UniProtKB-KW"/>
</dbReference>
<dbReference type="InterPro" id="IPR006459">
    <property type="entry name" value="CASP/CASPL"/>
</dbReference>
<dbReference type="InterPro" id="IPR006702">
    <property type="entry name" value="CASP_dom"/>
</dbReference>
<dbReference type="InterPro" id="IPR044173">
    <property type="entry name" value="CASPL"/>
</dbReference>
<dbReference type="NCBIfam" id="TIGR01569">
    <property type="entry name" value="A_tha_TIGR01569"/>
    <property type="match status" value="1"/>
</dbReference>
<dbReference type="PANTHER" id="PTHR36488:SF12">
    <property type="entry name" value="CASP-LIKE PROTEIN"/>
    <property type="match status" value="1"/>
</dbReference>
<dbReference type="PANTHER" id="PTHR36488">
    <property type="entry name" value="CASP-LIKE PROTEIN 1U1"/>
    <property type="match status" value="1"/>
</dbReference>
<dbReference type="Pfam" id="PF04535">
    <property type="entry name" value="CASP_dom"/>
    <property type="match status" value="1"/>
</dbReference>
<comment type="function">
    <text evidence="1">Regulates membrane-cell wall junctions and localized cell wall deposition. Required for establishment of the Casparian strip membrane domain (CSD) and the subsequent formation of Casparian strips, a cell wall modification of the root endodermis that determines an apoplastic barrier between the intraorganismal apoplasm and the extraorganismal apoplasm and prevents lateral diffusion (By similarity).</text>
</comment>
<comment type="subunit">
    <text evidence="1">Homodimer and heterodimers.</text>
</comment>
<comment type="subcellular location">
    <subcellularLocation>
        <location evidence="1">Cell membrane</location>
        <topology evidence="1">Multi-pass membrane protein</topology>
    </subcellularLocation>
    <text evidence="1">Very restricted localization following a belt shape within the plasma membrane which coincides with the position of the Casparian strip membrane domain in the root endodermis.</text>
</comment>
<comment type="similarity">
    <text evidence="3">Belongs to the Casparian strip membrane proteins (CASP) family.</text>
</comment>